<keyword id="KW-0963">Cytoplasm</keyword>
<keyword id="KW-0378">Hydrolase</keyword>
<keyword id="KW-0694">RNA-binding</keyword>
<keyword id="KW-0820">tRNA-binding</keyword>
<comment type="function">
    <text evidence="1">Hydrolyzes ribosome-free peptidyl-tRNAs (with 1 or more amino acids incorporated), which drop off the ribosome during protein synthesis, or as a result of ribosome stalling.</text>
</comment>
<comment type="function">
    <text evidence="1">Catalyzes the release of premature peptidyl moieties from peptidyl-tRNA molecules trapped in stalled 50S ribosomal subunits, and thus maintains levels of free tRNAs and 50S ribosomes.</text>
</comment>
<comment type="catalytic activity">
    <reaction evidence="1">
        <text>an N-acyl-L-alpha-aminoacyl-tRNA + H2O = an N-acyl-L-amino acid + a tRNA + H(+)</text>
        <dbReference type="Rhea" id="RHEA:54448"/>
        <dbReference type="Rhea" id="RHEA-COMP:10123"/>
        <dbReference type="Rhea" id="RHEA-COMP:13883"/>
        <dbReference type="ChEBI" id="CHEBI:15377"/>
        <dbReference type="ChEBI" id="CHEBI:15378"/>
        <dbReference type="ChEBI" id="CHEBI:59874"/>
        <dbReference type="ChEBI" id="CHEBI:78442"/>
        <dbReference type="ChEBI" id="CHEBI:138191"/>
        <dbReference type="EC" id="3.1.1.29"/>
    </reaction>
</comment>
<comment type="subunit">
    <text evidence="1">Monomer.</text>
</comment>
<comment type="subcellular location">
    <subcellularLocation>
        <location evidence="1">Cytoplasm</location>
    </subcellularLocation>
</comment>
<comment type="similarity">
    <text evidence="1">Belongs to the PTH family.</text>
</comment>
<organism>
    <name type="scientific">Prochlorococcus marinus (strain MIT 9312)</name>
    <dbReference type="NCBI Taxonomy" id="74546"/>
    <lineage>
        <taxon>Bacteria</taxon>
        <taxon>Bacillati</taxon>
        <taxon>Cyanobacteriota</taxon>
        <taxon>Cyanophyceae</taxon>
        <taxon>Synechococcales</taxon>
        <taxon>Prochlorococcaceae</taxon>
        <taxon>Prochlorococcus</taxon>
    </lineage>
</organism>
<gene>
    <name evidence="1" type="primary">pth</name>
    <name type="ordered locus">PMT9312_0252</name>
</gene>
<dbReference type="EC" id="3.1.1.29" evidence="1"/>
<dbReference type="EMBL" id="CP000111">
    <property type="protein sequence ID" value="ABB49313.1"/>
    <property type="molecule type" value="Genomic_DNA"/>
</dbReference>
<dbReference type="RefSeq" id="WP_011375817.1">
    <property type="nucleotide sequence ID" value="NC_007577.1"/>
</dbReference>
<dbReference type="SMR" id="Q31CT2"/>
<dbReference type="STRING" id="74546.PMT9312_0252"/>
<dbReference type="KEGG" id="pmi:PMT9312_0252"/>
<dbReference type="eggNOG" id="COG0193">
    <property type="taxonomic scope" value="Bacteria"/>
</dbReference>
<dbReference type="HOGENOM" id="CLU_062456_4_1_3"/>
<dbReference type="OrthoDB" id="9800507at2"/>
<dbReference type="Proteomes" id="UP000002715">
    <property type="component" value="Chromosome"/>
</dbReference>
<dbReference type="GO" id="GO:0005737">
    <property type="term" value="C:cytoplasm"/>
    <property type="evidence" value="ECO:0007669"/>
    <property type="project" value="UniProtKB-SubCell"/>
</dbReference>
<dbReference type="GO" id="GO:0004045">
    <property type="term" value="F:peptidyl-tRNA hydrolase activity"/>
    <property type="evidence" value="ECO:0007669"/>
    <property type="project" value="UniProtKB-UniRule"/>
</dbReference>
<dbReference type="GO" id="GO:0000049">
    <property type="term" value="F:tRNA binding"/>
    <property type="evidence" value="ECO:0007669"/>
    <property type="project" value="UniProtKB-UniRule"/>
</dbReference>
<dbReference type="GO" id="GO:0006515">
    <property type="term" value="P:protein quality control for misfolded or incompletely synthesized proteins"/>
    <property type="evidence" value="ECO:0007669"/>
    <property type="project" value="UniProtKB-UniRule"/>
</dbReference>
<dbReference type="GO" id="GO:0072344">
    <property type="term" value="P:rescue of stalled ribosome"/>
    <property type="evidence" value="ECO:0007669"/>
    <property type="project" value="UniProtKB-UniRule"/>
</dbReference>
<dbReference type="CDD" id="cd00462">
    <property type="entry name" value="PTH"/>
    <property type="match status" value="1"/>
</dbReference>
<dbReference type="FunFam" id="3.40.50.1470:FF:000001">
    <property type="entry name" value="Peptidyl-tRNA hydrolase"/>
    <property type="match status" value="1"/>
</dbReference>
<dbReference type="Gene3D" id="3.40.50.1470">
    <property type="entry name" value="Peptidyl-tRNA hydrolase"/>
    <property type="match status" value="1"/>
</dbReference>
<dbReference type="HAMAP" id="MF_00083">
    <property type="entry name" value="Pept_tRNA_hydro_bact"/>
    <property type="match status" value="1"/>
</dbReference>
<dbReference type="InterPro" id="IPR001328">
    <property type="entry name" value="Pept_tRNA_hydro"/>
</dbReference>
<dbReference type="InterPro" id="IPR018171">
    <property type="entry name" value="Pept_tRNA_hydro_CS"/>
</dbReference>
<dbReference type="InterPro" id="IPR036416">
    <property type="entry name" value="Pept_tRNA_hydro_sf"/>
</dbReference>
<dbReference type="NCBIfam" id="TIGR00447">
    <property type="entry name" value="pth"/>
    <property type="match status" value="1"/>
</dbReference>
<dbReference type="PANTHER" id="PTHR17224">
    <property type="entry name" value="PEPTIDYL-TRNA HYDROLASE"/>
    <property type="match status" value="1"/>
</dbReference>
<dbReference type="PANTHER" id="PTHR17224:SF1">
    <property type="entry name" value="PEPTIDYL-TRNA HYDROLASE"/>
    <property type="match status" value="1"/>
</dbReference>
<dbReference type="Pfam" id="PF01195">
    <property type="entry name" value="Pept_tRNA_hydro"/>
    <property type="match status" value="1"/>
</dbReference>
<dbReference type="SUPFAM" id="SSF53178">
    <property type="entry name" value="Peptidyl-tRNA hydrolase-like"/>
    <property type="match status" value="1"/>
</dbReference>
<dbReference type="PROSITE" id="PS01196">
    <property type="entry name" value="PEPT_TRNA_HYDROL_2"/>
    <property type="match status" value="1"/>
</dbReference>
<protein>
    <recommendedName>
        <fullName evidence="1">Peptidyl-tRNA hydrolase</fullName>
        <shortName evidence="1">Pth</shortName>
        <ecNumber evidence="1">3.1.1.29</ecNumber>
    </recommendedName>
</protein>
<feature type="chain" id="PRO_0000264075" description="Peptidyl-tRNA hydrolase">
    <location>
        <begin position="1"/>
        <end position="200"/>
    </location>
</feature>
<feature type="active site" description="Proton acceptor" evidence="1">
    <location>
        <position position="21"/>
    </location>
</feature>
<feature type="binding site" evidence="1">
    <location>
        <position position="16"/>
    </location>
    <ligand>
        <name>tRNA</name>
        <dbReference type="ChEBI" id="CHEBI:17843"/>
    </ligand>
</feature>
<feature type="binding site" evidence="1">
    <location>
        <position position="67"/>
    </location>
    <ligand>
        <name>tRNA</name>
        <dbReference type="ChEBI" id="CHEBI:17843"/>
    </ligand>
</feature>
<feature type="binding site" evidence="1">
    <location>
        <position position="69"/>
    </location>
    <ligand>
        <name>tRNA</name>
        <dbReference type="ChEBI" id="CHEBI:17843"/>
    </ligand>
</feature>
<feature type="binding site" evidence="1">
    <location>
        <position position="115"/>
    </location>
    <ligand>
        <name>tRNA</name>
        <dbReference type="ChEBI" id="CHEBI:17843"/>
    </ligand>
</feature>
<feature type="site" description="Discriminates between blocked and unblocked aminoacyl-tRNA" evidence="1">
    <location>
        <position position="11"/>
    </location>
</feature>
<feature type="site" description="Stabilizes the basic form of H active site to accept a proton" evidence="1">
    <location>
        <position position="94"/>
    </location>
</feature>
<evidence type="ECO:0000255" key="1">
    <source>
        <dbReference type="HAMAP-Rule" id="MF_00083"/>
    </source>
</evidence>
<name>PTH_PROM9</name>
<proteinExistence type="inferred from homology"/>
<sequence length="200" mass="22979">MNEIYLIGLGNPGKKYSNSRHNIGFLLLENLSKKYNSSFLLKDKLKSFYSEFKANDSTYRLFLPNTFMNNSGEAVLAILDWYKINLNQIFVIVDDKDLPLGKIRFRKKGSSGGHNGLKSIIEKLQTHDFNRIRIGIGSPPSTKETNNFNTISHVLGNISREEKSILDKVYVRVIESLEQLNTKKEEYIINKLNSFDIEQI</sequence>
<reference key="1">
    <citation type="journal article" date="2006" name="Science">
        <title>Genomic islands and the ecology and evolution of Prochlorococcus.</title>
        <authorList>
            <person name="Coleman M.L."/>
            <person name="Sullivan M.B."/>
            <person name="Martiny A.C."/>
            <person name="Steglich C."/>
            <person name="Barry K."/>
            <person name="Delong E.F."/>
            <person name="Chisholm S.W."/>
        </authorList>
    </citation>
    <scope>NUCLEOTIDE SEQUENCE [LARGE SCALE GENOMIC DNA]</scope>
    <source>
        <strain>MIT 9312</strain>
    </source>
</reference>
<accession>Q31CT2</accession>